<reference key="1">
    <citation type="journal article" date="1988" name="Biol. Chem. Hoppe-Seyler">
        <title>The primary structure of the hemoglobin of the Cormorant (Phalacrocorax carbo, Pelecaniformes).</title>
        <authorList>
            <person name="Huber K."/>
            <person name="Braunitzer G."/>
            <person name="Schneeganss D."/>
            <person name="Kosters J."/>
            <person name="Grimm F."/>
        </authorList>
    </citation>
    <scope>PROTEIN SEQUENCE</scope>
</reference>
<evidence type="ECO:0000255" key="1">
    <source>
        <dbReference type="PROSITE-ProRule" id="PRU00238"/>
    </source>
</evidence>
<sequence>MLGAEETALVRGVWQKVESAKDEMGEETLTRMFLVYPKTKTYFPHFDLHHGSEQIRNHGKKVVTALGNAIQNLDNLRQTLADLSNLHAYNLRVDPVNFKLLAQCFQVVLAVHLGQEYTPEVHVAFDKFLTAVAAVLAEKYR</sequence>
<gene>
    <name type="primary">HBAD</name>
</gene>
<feature type="chain" id="PRO_0000052835" description="Hemoglobin subunit alpha-D">
    <location>
        <begin position="1"/>
        <end position="141"/>
    </location>
</feature>
<feature type="domain" description="Globin" evidence="1">
    <location>
        <begin position="1"/>
        <end position="141"/>
    </location>
</feature>
<feature type="binding site" description="distal binding residue">
    <location>
        <position position="58"/>
    </location>
    <ligand>
        <name>heme b</name>
        <dbReference type="ChEBI" id="CHEBI:60344"/>
    </ligand>
    <ligandPart>
        <name>Fe</name>
        <dbReference type="ChEBI" id="CHEBI:18248"/>
    </ligandPart>
</feature>
<feature type="binding site" description="proximal binding residue">
    <location>
        <position position="87"/>
    </location>
    <ligand>
        <name>heme b</name>
        <dbReference type="ChEBI" id="CHEBI:60344"/>
    </ligand>
    <ligandPart>
        <name>Fe</name>
        <dbReference type="ChEBI" id="CHEBI:18248"/>
    </ligandPart>
</feature>
<accession>P10781</accession>
<proteinExistence type="evidence at protein level"/>
<keyword id="KW-0903">Direct protein sequencing</keyword>
<keyword id="KW-0349">Heme</keyword>
<keyword id="KW-0408">Iron</keyword>
<keyword id="KW-0479">Metal-binding</keyword>
<keyword id="KW-0561">Oxygen transport</keyword>
<keyword id="KW-0813">Transport</keyword>
<dbReference type="PIR" id="S01806">
    <property type="entry name" value="HACODG"/>
</dbReference>
<dbReference type="SMR" id="P10781"/>
<dbReference type="GO" id="GO:0072562">
    <property type="term" value="C:blood microparticle"/>
    <property type="evidence" value="ECO:0007669"/>
    <property type="project" value="TreeGrafter"/>
</dbReference>
<dbReference type="GO" id="GO:0031838">
    <property type="term" value="C:haptoglobin-hemoglobin complex"/>
    <property type="evidence" value="ECO:0007669"/>
    <property type="project" value="TreeGrafter"/>
</dbReference>
<dbReference type="GO" id="GO:0005833">
    <property type="term" value="C:hemoglobin complex"/>
    <property type="evidence" value="ECO:0007669"/>
    <property type="project" value="InterPro"/>
</dbReference>
<dbReference type="GO" id="GO:0031720">
    <property type="term" value="F:haptoglobin binding"/>
    <property type="evidence" value="ECO:0007669"/>
    <property type="project" value="TreeGrafter"/>
</dbReference>
<dbReference type="GO" id="GO:0020037">
    <property type="term" value="F:heme binding"/>
    <property type="evidence" value="ECO:0007669"/>
    <property type="project" value="InterPro"/>
</dbReference>
<dbReference type="GO" id="GO:0046872">
    <property type="term" value="F:metal ion binding"/>
    <property type="evidence" value="ECO:0007669"/>
    <property type="project" value="UniProtKB-KW"/>
</dbReference>
<dbReference type="GO" id="GO:0043177">
    <property type="term" value="F:organic acid binding"/>
    <property type="evidence" value="ECO:0007669"/>
    <property type="project" value="TreeGrafter"/>
</dbReference>
<dbReference type="GO" id="GO:0019825">
    <property type="term" value="F:oxygen binding"/>
    <property type="evidence" value="ECO:0007669"/>
    <property type="project" value="InterPro"/>
</dbReference>
<dbReference type="GO" id="GO:0005344">
    <property type="term" value="F:oxygen carrier activity"/>
    <property type="evidence" value="ECO:0007669"/>
    <property type="project" value="UniProtKB-KW"/>
</dbReference>
<dbReference type="GO" id="GO:0004601">
    <property type="term" value="F:peroxidase activity"/>
    <property type="evidence" value="ECO:0007669"/>
    <property type="project" value="TreeGrafter"/>
</dbReference>
<dbReference type="GO" id="GO:0042744">
    <property type="term" value="P:hydrogen peroxide catabolic process"/>
    <property type="evidence" value="ECO:0007669"/>
    <property type="project" value="TreeGrafter"/>
</dbReference>
<dbReference type="CDD" id="cd08927">
    <property type="entry name" value="Hb-alpha-like"/>
    <property type="match status" value="1"/>
</dbReference>
<dbReference type="FunFam" id="1.10.490.10:FF:000002">
    <property type="entry name" value="Hemoglobin subunit alpha"/>
    <property type="match status" value="1"/>
</dbReference>
<dbReference type="Gene3D" id="1.10.490.10">
    <property type="entry name" value="Globins"/>
    <property type="match status" value="1"/>
</dbReference>
<dbReference type="InterPro" id="IPR000971">
    <property type="entry name" value="Globin"/>
</dbReference>
<dbReference type="InterPro" id="IPR009050">
    <property type="entry name" value="Globin-like_sf"/>
</dbReference>
<dbReference type="InterPro" id="IPR012292">
    <property type="entry name" value="Globin/Proto"/>
</dbReference>
<dbReference type="InterPro" id="IPR002338">
    <property type="entry name" value="Hemoglobin_a-typ"/>
</dbReference>
<dbReference type="InterPro" id="IPR050056">
    <property type="entry name" value="Hemoglobin_oxygen_transport"/>
</dbReference>
<dbReference type="PANTHER" id="PTHR11442">
    <property type="entry name" value="HEMOGLOBIN FAMILY MEMBER"/>
    <property type="match status" value="1"/>
</dbReference>
<dbReference type="PANTHER" id="PTHR11442:SF41">
    <property type="entry name" value="HEMOGLOBIN SUBUNIT ZETA"/>
    <property type="match status" value="1"/>
</dbReference>
<dbReference type="Pfam" id="PF00042">
    <property type="entry name" value="Globin"/>
    <property type="match status" value="1"/>
</dbReference>
<dbReference type="PRINTS" id="PR00612">
    <property type="entry name" value="ALPHAHAEM"/>
</dbReference>
<dbReference type="SUPFAM" id="SSF46458">
    <property type="entry name" value="Globin-like"/>
    <property type="match status" value="1"/>
</dbReference>
<dbReference type="PROSITE" id="PS01033">
    <property type="entry name" value="GLOBIN"/>
    <property type="match status" value="1"/>
</dbReference>
<protein>
    <recommendedName>
        <fullName>Hemoglobin subunit alpha-D</fullName>
    </recommendedName>
    <alternativeName>
        <fullName>Alpha-D-globin</fullName>
    </alternativeName>
    <alternativeName>
        <fullName>Hemoglobin alpha-D chain</fullName>
    </alternativeName>
</protein>
<organism>
    <name type="scientific">Phalacrocorax carbo</name>
    <name type="common">Great cormorant</name>
    <name type="synonym">Pelecanus carbo</name>
    <dbReference type="NCBI Taxonomy" id="9209"/>
    <lineage>
        <taxon>Eukaryota</taxon>
        <taxon>Metazoa</taxon>
        <taxon>Chordata</taxon>
        <taxon>Craniata</taxon>
        <taxon>Vertebrata</taxon>
        <taxon>Euteleostomi</taxon>
        <taxon>Archelosauria</taxon>
        <taxon>Archosauria</taxon>
        <taxon>Dinosauria</taxon>
        <taxon>Saurischia</taxon>
        <taxon>Theropoda</taxon>
        <taxon>Coelurosauria</taxon>
        <taxon>Aves</taxon>
        <taxon>Neognathae</taxon>
        <taxon>Neoaves</taxon>
        <taxon>Aequornithes</taxon>
        <taxon>Suliformes</taxon>
        <taxon>Phalacrocoracidae</taxon>
        <taxon>Phalacrocorax</taxon>
    </lineage>
</organism>
<name>HBAD_PHACA</name>
<comment type="function">
    <text>Involved in oxygen transport from the lung to the various peripheral tissues.</text>
</comment>
<comment type="subunit">
    <text>Heterotetramer of two alpha-D chains and two beta chains.</text>
</comment>
<comment type="tissue specificity">
    <text>Red blood cells.</text>
</comment>
<comment type="developmental stage">
    <text>In birds, the alpha-D chain occurs in a minor hemoglobin component, called hemoglobin d, which is expressed in late embryonic and adult life.</text>
</comment>
<comment type="similarity">
    <text evidence="1">Belongs to the globin family.</text>
</comment>